<dbReference type="EMBL" id="Y17768">
    <property type="protein sequence ID" value="CAA76846.1"/>
    <property type="molecule type" value="mRNA"/>
</dbReference>
<dbReference type="SMR" id="O93422"/>
<dbReference type="GO" id="GO:0005576">
    <property type="term" value="C:extracellular region"/>
    <property type="evidence" value="ECO:0007669"/>
    <property type="project" value="UniProtKB-SubCell"/>
</dbReference>
<dbReference type="GO" id="GO:0030550">
    <property type="term" value="F:acetylcholine receptor inhibitor activity"/>
    <property type="evidence" value="ECO:0007669"/>
    <property type="project" value="UniProtKB-KW"/>
</dbReference>
<dbReference type="GO" id="GO:0099106">
    <property type="term" value="F:ion channel regulator activity"/>
    <property type="evidence" value="ECO:0007669"/>
    <property type="project" value="UniProtKB-KW"/>
</dbReference>
<dbReference type="GO" id="GO:0090729">
    <property type="term" value="F:toxin activity"/>
    <property type="evidence" value="ECO:0007669"/>
    <property type="project" value="UniProtKB-KW"/>
</dbReference>
<dbReference type="CDD" id="cd00206">
    <property type="entry name" value="TFP_snake_toxin"/>
    <property type="match status" value="1"/>
</dbReference>
<dbReference type="FunFam" id="2.10.60.10:FF:000024">
    <property type="entry name" value="Cytotoxin 1"/>
    <property type="match status" value="1"/>
</dbReference>
<dbReference type="Gene3D" id="2.10.60.10">
    <property type="entry name" value="CD59"/>
    <property type="match status" value="1"/>
</dbReference>
<dbReference type="InterPro" id="IPR003571">
    <property type="entry name" value="Snake_3FTx"/>
</dbReference>
<dbReference type="InterPro" id="IPR045860">
    <property type="entry name" value="Snake_toxin-like_sf"/>
</dbReference>
<dbReference type="InterPro" id="IPR018354">
    <property type="entry name" value="Snake_toxin_con_site"/>
</dbReference>
<dbReference type="InterPro" id="IPR054131">
    <property type="entry name" value="Toxin_cobra-type"/>
</dbReference>
<dbReference type="Pfam" id="PF21947">
    <property type="entry name" value="Toxin_cobra-type"/>
    <property type="match status" value="1"/>
</dbReference>
<dbReference type="SUPFAM" id="SSF57302">
    <property type="entry name" value="Snake toxin-like"/>
    <property type="match status" value="1"/>
</dbReference>
<dbReference type="PROSITE" id="PS00272">
    <property type="entry name" value="SNAKE_TOXIN"/>
    <property type="match status" value="1"/>
</dbReference>
<comment type="function">
    <text evidence="3">Binds with low affinity and weakly inhibits muscle nicotinic acetylcholine receptor (nAChR).</text>
</comment>
<comment type="subcellular location">
    <subcellularLocation>
        <location evidence="1">Secreted</location>
    </subcellularLocation>
</comment>
<comment type="tissue specificity">
    <text evidence="5">Expressed by the venom gland.</text>
</comment>
<comment type="similarity">
    <text evidence="5">Belongs to the three-finger toxin family. Ancestral subfamily. Orphan group II sub-subfamily.</text>
</comment>
<proteinExistence type="inferred from homology"/>
<accession>O93422</accession>
<protein>
    <recommendedName>
        <fullName evidence="4">Long neurotoxin homolog</fullName>
    </recommendedName>
    <alternativeName>
        <fullName evidence="6">Kappa-cobrotoxin</fullName>
    </alternativeName>
</protein>
<evidence type="ECO:0000250" key="1"/>
<evidence type="ECO:0000250" key="2">
    <source>
        <dbReference type="UniProtKB" id="Q8AY51"/>
    </source>
</evidence>
<evidence type="ECO:0000269" key="3">
    <source>
    </source>
</evidence>
<evidence type="ECO:0000303" key="4">
    <source>
    </source>
</evidence>
<evidence type="ECO:0000305" key="5"/>
<evidence type="ECO:0000312" key="6">
    <source>
        <dbReference type="EMBL" id="CAA76846.1"/>
    </source>
</evidence>
<keyword id="KW-0008">Acetylcholine receptor inhibiting toxin</keyword>
<keyword id="KW-1015">Disulfide bond</keyword>
<keyword id="KW-0872">Ion channel impairing toxin</keyword>
<keyword id="KW-0528">Neurotoxin</keyword>
<keyword id="KW-0629">Postsynaptic neurotoxin</keyword>
<keyword id="KW-0964">Secreted</keyword>
<keyword id="KW-0732">Signal</keyword>
<keyword id="KW-0800">Toxin</keyword>
<name>3NO2H_NAJAT</name>
<feature type="signal peptide" evidence="1">
    <location>
        <begin position="1"/>
        <end position="21"/>
    </location>
</feature>
<feature type="chain" id="PRO_0000035474" description="Long neurotoxin homolog">
    <location>
        <begin position="22"/>
        <end position="86"/>
    </location>
</feature>
<feature type="disulfide bond" evidence="2">
    <location>
        <begin position="24"/>
        <end position="45"/>
    </location>
</feature>
<feature type="disulfide bond" evidence="2">
    <location>
        <begin position="27"/>
        <end position="32"/>
    </location>
</feature>
<feature type="disulfide bond" evidence="2">
    <location>
        <begin position="38"/>
        <end position="63"/>
    </location>
</feature>
<feature type="disulfide bond" evidence="2">
    <location>
        <begin position="67"/>
        <end position="78"/>
    </location>
</feature>
<feature type="disulfide bond" evidence="2">
    <location>
        <begin position="79"/>
        <end position="84"/>
    </location>
</feature>
<reference key="1">
    <citation type="journal article" date="1998" name="Biochem. Mol. Biol. Int.">
        <title>Characterization and cloning of long neurotoxin homolog from Naja naja atra.</title>
        <authorList>
            <person name="Lin S.-R."/>
            <person name="Huang H.-B."/>
            <person name="Wu B.-N."/>
            <person name="Chang L.-S."/>
        </authorList>
    </citation>
    <scope>NUCLEOTIDE SEQUENCE [MRNA]</scope>
    <scope>FUNCTION</scope>
    <source>
        <tissue>Venom gland</tissue>
    </source>
</reference>
<sequence length="86" mass="9815">MKTLLLTLVVVTIVCLALGYTLTCLICPEKYCNKVHTCLNGEKICFKKYDQRKLLGKRYIRGCADTCPVRKPREIVECCSTDKCNH</sequence>
<organism>
    <name type="scientific">Naja atra</name>
    <name type="common">Chinese cobra</name>
    <dbReference type="NCBI Taxonomy" id="8656"/>
    <lineage>
        <taxon>Eukaryota</taxon>
        <taxon>Metazoa</taxon>
        <taxon>Chordata</taxon>
        <taxon>Craniata</taxon>
        <taxon>Vertebrata</taxon>
        <taxon>Euteleostomi</taxon>
        <taxon>Lepidosauria</taxon>
        <taxon>Squamata</taxon>
        <taxon>Bifurcata</taxon>
        <taxon>Unidentata</taxon>
        <taxon>Episquamata</taxon>
        <taxon>Toxicofera</taxon>
        <taxon>Serpentes</taxon>
        <taxon>Colubroidea</taxon>
        <taxon>Elapidae</taxon>
        <taxon>Elapinae</taxon>
        <taxon>Naja</taxon>
    </lineage>
</organism>